<accession>C4LIK9</accession>
<feature type="chain" id="PRO_0000395911" description="Pup--protein ligase">
    <location>
        <begin position="1"/>
        <end position="477"/>
    </location>
</feature>
<feature type="active site" description="Proton acceptor" evidence="1">
    <location>
        <position position="64"/>
    </location>
</feature>
<feature type="binding site" evidence="1">
    <location>
        <position position="16"/>
    </location>
    <ligand>
        <name>Mg(2+)</name>
        <dbReference type="ChEBI" id="CHEBI:18420"/>
    </ligand>
</feature>
<feature type="binding site" evidence="1">
    <location>
        <position position="60"/>
    </location>
    <ligand>
        <name>ATP</name>
        <dbReference type="ChEBI" id="CHEBI:30616"/>
    </ligand>
</feature>
<feature type="binding site" evidence="1">
    <location>
        <position position="62"/>
    </location>
    <ligand>
        <name>Mg(2+)</name>
        <dbReference type="ChEBI" id="CHEBI:18420"/>
    </ligand>
</feature>
<feature type="binding site" evidence="1">
    <location>
        <position position="70"/>
    </location>
    <ligand>
        <name>Mg(2+)</name>
        <dbReference type="ChEBI" id="CHEBI:18420"/>
    </ligand>
</feature>
<feature type="binding site" evidence="1">
    <location>
        <position position="73"/>
    </location>
    <ligand>
        <name>ATP</name>
        <dbReference type="ChEBI" id="CHEBI:30616"/>
    </ligand>
</feature>
<feature type="binding site" evidence="1">
    <location>
        <position position="441"/>
    </location>
    <ligand>
        <name>ATP</name>
        <dbReference type="ChEBI" id="CHEBI:30616"/>
    </ligand>
</feature>
<reference key="1">
    <citation type="journal article" date="2008" name="J. Biotechnol.">
        <title>Ultrafast pyrosequencing of Corynebacterium kroppenstedtii DSM44385 revealed insights into the physiology of a lipophilic corynebacterium that lacks mycolic acids.</title>
        <authorList>
            <person name="Tauch A."/>
            <person name="Schneider J."/>
            <person name="Szczepanowski R."/>
            <person name="Tilker A."/>
            <person name="Viehoever P."/>
            <person name="Gartemann K.-H."/>
            <person name="Arnold W."/>
            <person name="Blom J."/>
            <person name="Brinkrolf K."/>
            <person name="Brune I."/>
            <person name="Goetker S."/>
            <person name="Weisshaar B."/>
            <person name="Goesmann A."/>
            <person name="Droege M."/>
            <person name="Puehler A."/>
        </authorList>
    </citation>
    <scope>NUCLEOTIDE SEQUENCE [LARGE SCALE GENOMIC DNA]</scope>
    <source>
        <strain>DSM 44385 / JCM 11950 / CIP 105744 / CCUG 35717</strain>
    </source>
</reference>
<evidence type="ECO:0000255" key="1">
    <source>
        <dbReference type="HAMAP-Rule" id="MF_02111"/>
    </source>
</evidence>
<proteinExistence type="inferred from homology"/>
<dbReference type="EC" id="6.3.1.19" evidence="1"/>
<dbReference type="EMBL" id="CP001620">
    <property type="protein sequence ID" value="ACR17664.1"/>
    <property type="molecule type" value="Genomic_DNA"/>
</dbReference>
<dbReference type="SMR" id="C4LIK9"/>
<dbReference type="STRING" id="645127.ckrop_0910"/>
<dbReference type="KEGG" id="ckp:ckrop_0910"/>
<dbReference type="eggNOG" id="COG0638">
    <property type="taxonomic scope" value="Bacteria"/>
</dbReference>
<dbReference type="HOGENOM" id="CLU_040524_0_1_11"/>
<dbReference type="UniPathway" id="UPA00997"/>
<dbReference type="UniPathway" id="UPA00998"/>
<dbReference type="Proteomes" id="UP000001473">
    <property type="component" value="Chromosome"/>
</dbReference>
<dbReference type="GO" id="GO:0005524">
    <property type="term" value="F:ATP binding"/>
    <property type="evidence" value="ECO:0007669"/>
    <property type="project" value="UniProtKB-UniRule"/>
</dbReference>
<dbReference type="GO" id="GO:0016879">
    <property type="term" value="F:ligase activity, forming carbon-nitrogen bonds"/>
    <property type="evidence" value="ECO:0007669"/>
    <property type="project" value="InterPro"/>
</dbReference>
<dbReference type="GO" id="GO:0000287">
    <property type="term" value="F:magnesium ion binding"/>
    <property type="evidence" value="ECO:0007669"/>
    <property type="project" value="UniProtKB-UniRule"/>
</dbReference>
<dbReference type="GO" id="GO:0019787">
    <property type="term" value="F:ubiquitin-like protein transferase activity"/>
    <property type="evidence" value="ECO:0007669"/>
    <property type="project" value="UniProtKB-UniRule"/>
</dbReference>
<dbReference type="GO" id="GO:0019941">
    <property type="term" value="P:modification-dependent protein catabolic process"/>
    <property type="evidence" value="ECO:0007669"/>
    <property type="project" value="UniProtKB-UniRule"/>
</dbReference>
<dbReference type="GO" id="GO:0010498">
    <property type="term" value="P:proteasomal protein catabolic process"/>
    <property type="evidence" value="ECO:0007669"/>
    <property type="project" value="UniProtKB-UniRule"/>
</dbReference>
<dbReference type="GO" id="GO:0070490">
    <property type="term" value="P:protein pupylation"/>
    <property type="evidence" value="ECO:0007669"/>
    <property type="project" value="UniProtKB-UniRule"/>
</dbReference>
<dbReference type="HAMAP" id="MF_02111">
    <property type="entry name" value="Pup_ligase"/>
    <property type="match status" value="1"/>
</dbReference>
<dbReference type="InterPro" id="IPR022279">
    <property type="entry name" value="Pup_ligase"/>
</dbReference>
<dbReference type="InterPro" id="IPR004347">
    <property type="entry name" value="Pup_ligase/deamidase"/>
</dbReference>
<dbReference type="NCBIfam" id="TIGR03686">
    <property type="entry name" value="pupylate_PafA"/>
    <property type="match status" value="1"/>
</dbReference>
<dbReference type="PANTHER" id="PTHR42307">
    <property type="entry name" value="PUP DEAMIDASE/DEPUPYLASE"/>
    <property type="match status" value="1"/>
</dbReference>
<dbReference type="PANTHER" id="PTHR42307:SF3">
    <property type="entry name" value="PUP--PROTEIN LIGASE"/>
    <property type="match status" value="1"/>
</dbReference>
<dbReference type="Pfam" id="PF03136">
    <property type="entry name" value="Pup_ligase"/>
    <property type="match status" value="1"/>
</dbReference>
<dbReference type="PIRSF" id="PIRSF018077">
    <property type="entry name" value="UCP018077"/>
    <property type="match status" value="1"/>
</dbReference>
<keyword id="KW-0067">ATP-binding</keyword>
<keyword id="KW-0436">Ligase</keyword>
<keyword id="KW-0460">Magnesium</keyword>
<keyword id="KW-0479">Metal-binding</keyword>
<keyword id="KW-0547">Nucleotide-binding</keyword>
<keyword id="KW-1185">Reference proteome</keyword>
<keyword id="KW-0833">Ubl conjugation pathway</keyword>
<gene>
    <name evidence="1" type="primary">pafA</name>
    <name type="ordered locus">ckrop_0910</name>
</gene>
<sequence>MSADKAVFTRRIMGIETEFGITCTHDGAQAVAPDDIARQLFRPIVDRFRSSNIYTLNGGRLYLDVGSHPEYATPECDSLNQLLIYDRAGEVTLNRLADQAEHALADQHIEGTVHLMKNNTDSLGNSYGCHENYLVGRAILLKKLGQEFIPFLITRQLICGAGHIARPHSRFSDGDTTPVYQLSQRADHVWEGVSSATTRSRPIINTRDEPHADSEMYRRLHVIVGDSSMSETTAALKIGSALLVLEMLEAGCSFDEWEIANPSKTIRDISRDLTGRAEVPLRSGRISCALEIQQAFAEKAQQWLDERPEEQHGTPNADMQRVVDLWKKVLAAIDSGDTSSIEADIDWVIKKNIIDRYQDKFGWDLTHPKLQQIDYAYHDIRPGKGIFRTLEERGRVSRWLDGADSSITDAADTPPQTTRAKMRGDFLRVAQENDADVSVDWTRLKINRPEPHDIALLDPFAAHDSRADDMISSILDR</sequence>
<protein>
    <recommendedName>
        <fullName evidence="1">Pup--protein ligase</fullName>
        <ecNumber evidence="1">6.3.1.19</ecNumber>
    </recommendedName>
    <alternativeName>
        <fullName evidence="1">Proteasome accessory factor A</fullName>
    </alternativeName>
    <alternativeName>
        <fullName evidence="1">Pup-conjugating enzyme</fullName>
    </alternativeName>
</protein>
<organism>
    <name type="scientific">Corynebacterium kroppenstedtii (strain DSM 44385 / JCM 11950 / CIP 105744 / CCUG 35717)</name>
    <dbReference type="NCBI Taxonomy" id="645127"/>
    <lineage>
        <taxon>Bacteria</taxon>
        <taxon>Bacillati</taxon>
        <taxon>Actinomycetota</taxon>
        <taxon>Actinomycetes</taxon>
        <taxon>Mycobacteriales</taxon>
        <taxon>Corynebacteriaceae</taxon>
        <taxon>Corynebacterium</taxon>
    </lineage>
</organism>
<comment type="function">
    <text evidence="1">Catalyzes the covalent attachment of the prokaryotic ubiquitin-like protein modifier Pup to the proteasomal substrate proteins, thereby targeting them for proteasomal degradation. This tagging system is termed pupylation. The ligation reaction involves the side-chain carboxylate of the C-terminal glutamate of Pup and the side-chain amino group of a substrate lysine.</text>
</comment>
<comment type="catalytic activity">
    <reaction evidence="1">
        <text>ATP + [prokaryotic ubiquitin-like protein]-L-glutamate + [protein]-L-lysine = ADP + phosphate + N(6)-([prokaryotic ubiquitin-like protein]-gamma-L-glutamyl)-[protein]-L-lysine.</text>
        <dbReference type="EC" id="6.3.1.19"/>
    </reaction>
</comment>
<comment type="pathway">
    <text evidence="1">Protein degradation; proteasomal Pup-dependent pathway.</text>
</comment>
<comment type="pathway">
    <text evidence="1">Protein modification; protein pupylation.</text>
</comment>
<comment type="miscellaneous">
    <text evidence="1">The reaction mechanism probably proceeds via the activation of Pup by phosphorylation of its C-terminal glutamate, which is then subject to nucleophilic attack by the substrate lysine, resulting in an isopeptide bond and the release of phosphate as a good leaving group.</text>
</comment>
<comment type="similarity">
    <text evidence="1">Belongs to the Pup ligase/Pup deamidase family. Pup-conjugating enzyme subfamily.</text>
</comment>
<name>PAFA_CORK4</name>